<feature type="chain" id="PRO_1000164109" description="UPF0299 membrane protein YohJ">
    <location>
        <begin position="1"/>
        <end position="132"/>
    </location>
</feature>
<feature type="transmembrane region" description="Helical" evidence="1">
    <location>
        <begin position="7"/>
        <end position="27"/>
    </location>
</feature>
<feature type="transmembrane region" description="Helical" evidence="1">
    <location>
        <begin position="31"/>
        <end position="51"/>
    </location>
</feature>
<feature type="transmembrane region" description="Helical" evidence="1">
    <location>
        <begin position="63"/>
        <end position="83"/>
    </location>
</feature>
<feature type="transmembrane region" description="Helical" evidence="1">
    <location>
        <begin position="93"/>
        <end position="113"/>
    </location>
</feature>
<sequence>MSKSLNIIWQYIRAFVLIYACLYAGIFLASLLPITIPGSIIGMLILFVLLALQILPAKWVNPGCYVLIRYMALLFVPIGVGVMQYFDLLRAQFGPVVVSCAISTLVVFVVVSWSSHLIHGERKVVGQKGTKK</sequence>
<gene>
    <name evidence="1" type="primary">yohJ</name>
    <name type="ordered locus">SPC_1521</name>
</gene>
<protein>
    <recommendedName>
        <fullName evidence="1">UPF0299 membrane protein YohJ</fullName>
    </recommendedName>
</protein>
<proteinExistence type="inferred from homology"/>
<accession>C0Q0V6</accession>
<reference key="1">
    <citation type="journal article" date="2009" name="PLoS ONE">
        <title>Salmonella paratyphi C: genetic divergence from Salmonella choleraesuis and pathogenic convergence with Salmonella typhi.</title>
        <authorList>
            <person name="Liu W.-Q."/>
            <person name="Feng Y."/>
            <person name="Wang Y."/>
            <person name="Zou Q.-H."/>
            <person name="Chen F."/>
            <person name="Guo J.-T."/>
            <person name="Peng Y.-H."/>
            <person name="Jin Y."/>
            <person name="Li Y.-G."/>
            <person name="Hu S.-N."/>
            <person name="Johnston R.N."/>
            <person name="Liu G.-R."/>
            <person name="Liu S.-L."/>
        </authorList>
    </citation>
    <scope>NUCLEOTIDE SEQUENCE [LARGE SCALE GENOMIC DNA]</scope>
    <source>
        <strain>RKS4594</strain>
    </source>
</reference>
<evidence type="ECO:0000255" key="1">
    <source>
        <dbReference type="HAMAP-Rule" id="MF_01144"/>
    </source>
</evidence>
<organism>
    <name type="scientific">Salmonella paratyphi C (strain RKS4594)</name>
    <dbReference type="NCBI Taxonomy" id="476213"/>
    <lineage>
        <taxon>Bacteria</taxon>
        <taxon>Pseudomonadati</taxon>
        <taxon>Pseudomonadota</taxon>
        <taxon>Gammaproteobacteria</taxon>
        <taxon>Enterobacterales</taxon>
        <taxon>Enterobacteriaceae</taxon>
        <taxon>Salmonella</taxon>
    </lineage>
</organism>
<dbReference type="EMBL" id="CP000857">
    <property type="protein sequence ID" value="ACN45675.1"/>
    <property type="molecule type" value="Genomic_DNA"/>
</dbReference>
<dbReference type="RefSeq" id="WP_000045719.1">
    <property type="nucleotide sequence ID" value="NC_012125.1"/>
</dbReference>
<dbReference type="SMR" id="C0Q0V6"/>
<dbReference type="KEGG" id="sei:SPC_1521"/>
<dbReference type="HOGENOM" id="CLU_113736_1_1_6"/>
<dbReference type="Proteomes" id="UP000001599">
    <property type="component" value="Chromosome"/>
</dbReference>
<dbReference type="GO" id="GO:0005886">
    <property type="term" value="C:plasma membrane"/>
    <property type="evidence" value="ECO:0007669"/>
    <property type="project" value="UniProtKB-SubCell"/>
</dbReference>
<dbReference type="HAMAP" id="MF_01144">
    <property type="entry name" value="UPF0299"/>
    <property type="match status" value="1"/>
</dbReference>
<dbReference type="InterPro" id="IPR005538">
    <property type="entry name" value="LrgA/CidA"/>
</dbReference>
<dbReference type="InterPro" id="IPR022957">
    <property type="entry name" value="Uncharacterised_UPF0299"/>
</dbReference>
<dbReference type="NCBIfam" id="NF002494">
    <property type="entry name" value="PRK01821.1"/>
    <property type="match status" value="1"/>
</dbReference>
<dbReference type="PANTHER" id="PTHR33931">
    <property type="entry name" value="HOLIN-LIKE PROTEIN CIDA-RELATED"/>
    <property type="match status" value="1"/>
</dbReference>
<dbReference type="PANTHER" id="PTHR33931:SF5">
    <property type="entry name" value="UPF0299 MEMBRANE PROTEIN YOHJ"/>
    <property type="match status" value="1"/>
</dbReference>
<dbReference type="Pfam" id="PF03788">
    <property type="entry name" value="LrgA"/>
    <property type="match status" value="1"/>
</dbReference>
<comment type="subcellular location">
    <subcellularLocation>
        <location evidence="1">Cell inner membrane</location>
        <topology evidence="1">Multi-pass membrane protein</topology>
    </subcellularLocation>
</comment>
<comment type="similarity">
    <text evidence="1">Belongs to the UPF0299 family.</text>
</comment>
<keyword id="KW-0997">Cell inner membrane</keyword>
<keyword id="KW-1003">Cell membrane</keyword>
<keyword id="KW-0472">Membrane</keyword>
<keyword id="KW-0812">Transmembrane</keyword>
<keyword id="KW-1133">Transmembrane helix</keyword>
<name>YOHJ_SALPC</name>